<dbReference type="EC" id="5.4.2.12" evidence="1"/>
<dbReference type="EMBL" id="AE016823">
    <property type="protein sequence ID" value="AAS69006.1"/>
    <property type="status" value="ALT_INIT"/>
    <property type="molecule type" value="Genomic_DNA"/>
</dbReference>
<dbReference type="RefSeq" id="WP_002084923.1">
    <property type="nucleotide sequence ID" value="NC_005823.1"/>
</dbReference>
<dbReference type="SMR" id="Q72VB8"/>
<dbReference type="GeneID" id="61143738"/>
<dbReference type="KEGG" id="lic:LIC_10383"/>
<dbReference type="HOGENOM" id="CLU_026099_3_1_12"/>
<dbReference type="UniPathway" id="UPA00109">
    <property type="reaction ID" value="UER00186"/>
</dbReference>
<dbReference type="Proteomes" id="UP000007037">
    <property type="component" value="Chromosome I"/>
</dbReference>
<dbReference type="GO" id="GO:0005737">
    <property type="term" value="C:cytoplasm"/>
    <property type="evidence" value="ECO:0007669"/>
    <property type="project" value="InterPro"/>
</dbReference>
<dbReference type="GO" id="GO:0030145">
    <property type="term" value="F:manganese ion binding"/>
    <property type="evidence" value="ECO:0007669"/>
    <property type="project" value="InterPro"/>
</dbReference>
<dbReference type="GO" id="GO:0004619">
    <property type="term" value="F:phosphoglycerate mutase activity"/>
    <property type="evidence" value="ECO:0007669"/>
    <property type="project" value="UniProtKB-EC"/>
</dbReference>
<dbReference type="GO" id="GO:0006007">
    <property type="term" value="P:glucose catabolic process"/>
    <property type="evidence" value="ECO:0007669"/>
    <property type="project" value="InterPro"/>
</dbReference>
<dbReference type="GO" id="GO:0006096">
    <property type="term" value="P:glycolytic process"/>
    <property type="evidence" value="ECO:0007669"/>
    <property type="project" value="UniProtKB-UniPathway"/>
</dbReference>
<dbReference type="CDD" id="cd16010">
    <property type="entry name" value="iPGM"/>
    <property type="match status" value="1"/>
</dbReference>
<dbReference type="FunFam" id="3.40.1450.10:FF:000002">
    <property type="entry name" value="2,3-bisphosphoglycerate-independent phosphoglycerate mutase"/>
    <property type="match status" value="1"/>
</dbReference>
<dbReference type="Gene3D" id="3.40.720.10">
    <property type="entry name" value="Alkaline Phosphatase, subunit A"/>
    <property type="match status" value="1"/>
</dbReference>
<dbReference type="Gene3D" id="3.40.1450.10">
    <property type="entry name" value="BPG-independent phosphoglycerate mutase, domain B"/>
    <property type="match status" value="1"/>
</dbReference>
<dbReference type="InterPro" id="IPR017850">
    <property type="entry name" value="Alkaline_phosphatase_core_sf"/>
</dbReference>
<dbReference type="InterPro" id="IPR011258">
    <property type="entry name" value="BPG-indep_PGM_N"/>
</dbReference>
<dbReference type="InterPro" id="IPR006124">
    <property type="entry name" value="Metalloenzyme"/>
</dbReference>
<dbReference type="InterPro" id="IPR036646">
    <property type="entry name" value="PGAM_B_sf"/>
</dbReference>
<dbReference type="InterPro" id="IPR005995">
    <property type="entry name" value="Pgm_bpd_ind"/>
</dbReference>
<dbReference type="NCBIfam" id="TIGR01307">
    <property type="entry name" value="pgm_bpd_ind"/>
    <property type="match status" value="1"/>
</dbReference>
<dbReference type="PANTHER" id="PTHR31637">
    <property type="entry name" value="2,3-BISPHOSPHOGLYCERATE-INDEPENDENT PHOSPHOGLYCERATE MUTASE"/>
    <property type="match status" value="1"/>
</dbReference>
<dbReference type="PANTHER" id="PTHR31637:SF0">
    <property type="entry name" value="2,3-BISPHOSPHOGLYCERATE-INDEPENDENT PHOSPHOGLYCERATE MUTASE"/>
    <property type="match status" value="1"/>
</dbReference>
<dbReference type="Pfam" id="PF06415">
    <property type="entry name" value="iPGM_N"/>
    <property type="match status" value="1"/>
</dbReference>
<dbReference type="Pfam" id="PF01676">
    <property type="entry name" value="Metalloenzyme"/>
    <property type="match status" value="1"/>
</dbReference>
<dbReference type="PIRSF" id="PIRSF001492">
    <property type="entry name" value="IPGAM"/>
    <property type="match status" value="1"/>
</dbReference>
<dbReference type="SUPFAM" id="SSF64158">
    <property type="entry name" value="2,3-Bisphosphoglycerate-independent phosphoglycerate mutase, substrate-binding domain"/>
    <property type="match status" value="1"/>
</dbReference>
<dbReference type="SUPFAM" id="SSF53649">
    <property type="entry name" value="Alkaline phosphatase-like"/>
    <property type="match status" value="1"/>
</dbReference>
<evidence type="ECO:0000250" key="1">
    <source>
        <dbReference type="UniProtKB" id="Q9X519"/>
    </source>
</evidence>
<evidence type="ECO:0000305" key="2"/>
<accession>Q72VB8</accession>
<keyword id="KW-0324">Glycolysis</keyword>
<keyword id="KW-0413">Isomerase</keyword>
<keyword id="KW-0464">Manganese</keyword>
<keyword id="KW-0479">Metal-binding</keyword>
<reference key="1">
    <citation type="journal article" date="2004" name="J. Bacteriol.">
        <title>Comparative genomics of two Leptospira interrogans serovars reveals novel insights into physiology and pathogenesis.</title>
        <authorList>
            <person name="Nascimento A.L.T.O."/>
            <person name="Ko A.I."/>
            <person name="Martins E.A.L."/>
            <person name="Monteiro-Vitorello C.B."/>
            <person name="Ho P.L."/>
            <person name="Haake D.A."/>
            <person name="Verjovski-Almeida S."/>
            <person name="Hartskeerl R.A."/>
            <person name="Marques M.V."/>
            <person name="Oliveira M.C."/>
            <person name="Menck C.F.M."/>
            <person name="Leite L.C.C."/>
            <person name="Carrer H."/>
            <person name="Coutinho L.L."/>
            <person name="Degrave W.M."/>
            <person name="Dellagostin O.A."/>
            <person name="El-Dorry H."/>
            <person name="Ferro E.S."/>
            <person name="Ferro M.I.T."/>
            <person name="Furlan L.R."/>
            <person name="Gamberini M."/>
            <person name="Giglioti E.A."/>
            <person name="Goes-Neto A."/>
            <person name="Goldman G.H."/>
            <person name="Goldman M.H.S."/>
            <person name="Harakava R."/>
            <person name="Jeronimo S.M.B."/>
            <person name="Junqueira-de-Azevedo I.L.M."/>
            <person name="Kimura E.T."/>
            <person name="Kuramae E.E."/>
            <person name="Lemos E.G.M."/>
            <person name="Lemos M.V.F."/>
            <person name="Marino C.L."/>
            <person name="Nunes L.R."/>
            <person name="de Oliveira R.C."/>
            <person name="Pereira G.G."/>
            <person name="Reis M.S."/>
            <person name="Schriefer A."/>
            <person name="Siqueira W.J."/>
            <person name="Sommer P."/>
            <person name="Tsai S.M."/>
            <person name="Simpson A.J.G."/>
            <person name="Ferro J.A."/>
            <person name="Camargo L.E.A."/>
            <person name="Kitajima J.P."/>
            <person name="Setubal J.C."/>
            <person name="Van Sluys M.A."/>
        </authorList>
    </citation>
    <scope>NUCLEOTIDE SEQUENCE [LARGE SCALE GENOMIC DNA]</scope>
    <source>
        <strain>Fiocruz L1-130</strain>
    </source>
</reference>
<sequence length="548" mass="61052">MKLSKKYTFRSRKVLLIILDGVGYSPKGPESGNAIAGAKLPFLNRVWNQFPTLHIQAHGKAVGMPSDDDMGNSEVGHNVLGSGRIFDQGAKLVSNSIASGDIFNGQAWKEVIGNSKKNNSTLHLLGLFSDGNVHSHIDHTKALISQAILEKVPKIRLHILLDGRDVPEKSALDYLNPFETWLNSLRKSGTDIRIASGGGRMTITMDRYEADWSMVERGWKVHVKGEGRYFSSAKEAIETFRSENPKIIDQYLPSFVISDNGKPVGKIQDGDSVVFTNFRGDRAIEISLAFTEKNFDKFDRGPLPNVLYAGIMQYDGDLKLPERFLVAPPAIDRTLGEYMASSNIPQYALSETQKYGHVTYFWNGNKSGYFDQNSEEYREILSDVIPFDQSPEMKALLITEALEKALNENKQDFYRVNYANGDMVGHTGNYLATVQAMEFLDGCVERLWKTCEKQNIVLLVTADHGNADEMFQLDKKGNVEKDSHGNPIPKTSHTLNPVPISILDPENKIRFNSKLSNPGLANVAATILDVMGYETPEGYHPSLIQNES</sequence>
<gene>
    <name type="primary">gpmI</name>
    <name type="ordered locus">LIC_10383</name>
</gene>
<proteinExistence type="inferred from homology"/>
<protein>
    <recommendedName>
        <fullName evidence="1">Probable 2,3-bisphosphoglycerate-independent phosphoglycerate mutase</fullName>
        <shortName evidence="1">BPG-independent PGAM</shortName>
        <shortName evidence="1">Phosphoglyceromutase</shortName>
        <shortName evidence="1">iPGM</shortName>
        <ecNumber evidence="1">5.4.2.12</ecNumber>
    </recommendedName>
</protein>
<feature type="chain" id="PRO_0000212161" description="Probable 2,3-bisphosphoglycerate-independent phosphoglycerate mutase">
    <location>
        <begin position="1"/>
        <end position="548"/>
    </location>
</feature>
<feature type="active site" description="Phosphoserine intermediate" evidence="1">
    <location>
        <position position="73"/>
    </location>
</feature>
<feature type="binding site" evidence="1">
    <location>
        <position position="20"/>
    </location>
    <ligand>
        <name>Mn(2+)</name>
        <dbReference type="ChEBI" id="CHEBI:29035"/>
        <label>2</label>
    </ligand>
</feature>
<feature type="binding site" evidence="1">
    <location>
        <position position="73"/>
    </location>
    <ligand>
        <name>Mn(2+)</name>
        <dbReference type="ChEBI" id="CHEBI:29035"/>
        <label>2</label>
    </ligand>
</feature>
<feature type="binding site" evidence="1">
    <location>
        <position position="134"/>
    </location>
    <ligand>
        <name>substrate</name>
    </ligand>
</feature>
<feature type="binding site" evidence="1">
    <location>
        <begin position="164"/>
        <end position="165"/>
    </location>
    <ligand>
        <name>substrate</name>
    </ligand>
</feature>
<feature type="binding site" evidence="1">
    <location>
        <position position="200"/>
    </location>
    <ligand>
        <name>substrate</name>
    </ligand>
</feature>
<feature type="binding site" evidence="1">
    <location>
        <position position="207"/>
    </location>
    <ligand>
        <name>substrate</name>
    </ligand>
</feature>
<feature type="binding site" evidence="1">
    <location>
        <begin position="279"/>
        <end position="282"/>
    </location>
    <ligand>
        <name>substrate</name>
    </ligand>
</feature>
<feature type="binding site" evidence="1">
    <location>
        <position position="354"/>
    </location>
    <ligand>
        <name>substrate</name>
    </ligand>
</feature>
<feature type="binding site" evidence="1">
    <location>
        <position position="422"/>
    </location>
    <ligand>
        <name>Mn(2+)</name>
        <dbReference type="ChEBI" id="CHEBI:29035"/>
        <label>1</label>
    </ligand>
</feature>
<feature type="binding site" evidence="1">
    <location>
        <position position="426"/>
    </location>
    <ligand>
        <name>Mn(2+)</name>
        <dbReference type="ChEBI" id="CHEBI:29035"/>
        <label>1</label>
    </ligand>
</feature>
<feature type="binding site" evidence="1">
    <location>
        <position position="463"/>
    </location>
    <ligand>
        <name>Mn(2+)</name>
        <dbReference type="ChEBI" id="CHEBI:29035"/>
        <label>2</label>
    </ligand>
</feature>
<feature type="binding site" evidence="1">
    <location>
        <position position="464"/>
    </location>
    <ligand>
        <name>Mn(2+)</name>
        <dbReference type="ChEBI" id="CHEBI:29035"/>
        <label>2</label>
    </ligand>
</feature>
<feature type="binding site" evidence="1">
    <location>
        <position position="493"/>
    </location>
    <ligand>
        <name>Mn(2+)</name>
        <dbReference type="ChEBI" id="CHEBI:29035"/>
        <label>1</label>
    </ligand>
</feature>
<name>GPMI_LEPIC</name>
<organism>
    <name type="scientific">Leptospira interrogans serogroup Icterohaemorrhagiae serovar copenhageni (strain Fiocruz L1-130)</name>
    <dbReference type="NCBI Taxonomy" id="267671"/>
    <lineage>
        <taxon>Bacteria</taxon>
        <taxon>Pseudomonadati</taxon>
        <taxon>Spirochaetota</taxon>
        <taxon>Spirochaetia</taxon>
        <taxon>Leptospirales</taxon>
        <taxon>Leptospiraceae</taxon>
        <taxon>Leptospira</taxon>
    </lineage>
</organism>
<comment type="function">
    <text evidence="1">Catalyzes the interconversion of 2-phosphoglycerate and 3-phosphoglycerate.</text>
</comment>
<comment type="catalytic activity">
    <reaction evidence="1">
        <text>(2R)-2-phosphoglycerate = (2R)-3-phosphoglycerate</text>
        <dbReference type="Rhea" id="RHEA:15901"/>
        <dbReference type="ChEBI" id="CHEBI:58272"/>
        <dbReference type="ChEBI" id="CHEBI:58289"/>
        <dbReference type="EC" id="5.4.2.12"/>
    </reaction>
</comment>
<comment type="cofactor">
    <cofactor evidence="1">
        <name>Mn(2+)</name>
        <dbReference type="ChEBI" id="CHEBI:29035"/>
    </cofactor>
    <text evidence="1">Binds 2 manganese ions per subunit.</text>
</comment>
<comment type="pathway">
    <text evidence="1">Carbohydrate degradation; glycolysis; pyruvate from D-glyceraldehyde 3-phosphate: step 3/5.</text>
</comment>
<comment type="subunit">
    <text evidence="1">Monomer.</text>
</comment>
<comment type="similarity">
    <text evidence="1">Belongs to the BPG-independent phosphoglycerate mutase family.</text>
</comment>
<comment type="sequence caution" evidence="2">
    <conflict type="erroneous initiation">
        <sequence resource="EMBL-CDS" id="AAS69006"/>
    </conflict>
    <text>Extended N-terminus.</text>
</comment>